<comment type="function">
    <text evidence="4 9 10">Acetyltransferase; part of the gene cluster that mediates the biosynthesis of pyripyropene A, a specific human acyl-coenzyme A:cholesterol acyltransferase 2 inhibitor (PubMed:20861902). The first step of the pathway is the synthesis of nicotinyl-CoA from nicotinic acid by the nicotinic acid-CoA ligase pyr1 (PubMed:20861902). Nicotinyl-CoA is then a substrate of polyketide synthase pyr2 to produce 4-hydroxy-6-(3-pyridinyl)-2H-pyran-2-one (HPPO) which is further prenylated by the polyprenyl transferase pyr6 to yield farnesyl-HPPO (PubMed:20861902). The next steps consist of an epoxidation of farnesyl-HPPO to epoxyfarnesyl-HPPO by FAD-dependent monooxygenase pyr5 and a cyclization of the terpenoid portion by the terpene cyclase pyr4 to yield deacetyl-pyripyropene E (PubMed:20861902). The 2 cytochrome P450 monooxygenases pyr3 and pyr9, and the 2 acetyltransferases pyr7 and pyr8 are involved in the conversion of deacetyl-pyripyropene E into pyripyropene A through several cycles of oxidation and acetylation steps (PubMed:20861902). Pyr7 acetylates deacetyl-pyripyropene E to pyripyropene E which is oxidized to 11-deacetyl-pyripyropene O by pyr3, which is in turn acetylated into pyripyropene O by pyr8 (PubMed:21224862, PubMed:26019565). Pyripyropene O is then oxidized to deacetyl-pyripyropene A by pyr9 (PubMed:21224862). Deacetyl-pyripyropene A is finally acetylated to pyripyropene A by pyr8 (PubMed:26019565).</text>
</comment>
<comment type="pathway">
    <text evidence="4">Secondary metabolite biosynthesis; terpenoid biosynthesis.</text>
</comment>
<comment type="subcellular location">
    <subcellularLocation>
        <location evidence="1">Membrane</location>
        <topology evidence="1">Multi-pass membrane protein</topology>
    </subcellularLocation>
</comment>
<comment type="biotechnology">
    <text evidence="2 3 5">Pyripyropene A and its derivatives have very unique characteristics of selectively inhibiting the acyl-coenzyme A:cholesterol acyltransferase 2 (ACAT2) isozyme (PubMed:18997389). Therefore, pyripyropenes are expected to be developed as a new type of anti-atherosclerotic agent (PubMed:18997389). Furthermore, pyripyropenes have been shown to exhibit anti-angiogenic activity against human umbilical vein endothelial cells (PubMed:19571395). Finally, pyripyropene A also exhibits insecticidal properties (PubMed:8534106).</text>
</comment>
<comment type="similarity">
    <text evidence="7">Belongs to the wax synthase family.</text>
</comment>
<protein>
    <recommendedName>
        <fullName evidence="6">Acetyltransferase pyr8</fullName>
        <ecNumber evidence="8">2.3.1.-</ecNumber>
    </recommendedName>
    <alternativeName>
        <fullName evidence="6">Pyripyropene synthesis protein 8</fullName>
    </alternativeName>
</protein>
<name>PYR8_ASPFU</name>
<evidence type="ECO:0000255" key="1"/>
<evidence type="ECO:0000269" key="2">
    <source>
    </source>
</evidence>
<evidence type="ECO:0000269" key="3">
    <source>
    </source>
</evidence>
<evidence type="ECO:0000269" key="4">
    <source>
    </source>
</evidence>
<evidence type="ECO:0000269" key="5">
    <source>
    </source>
</evidence>
<evidence type="ECO:0000303" key="6">
    <source>
    </source>
</evidence>
<evidence type="ECO:0000305" key="7"/>
<evidence type="ECO:0000305" key="8">
    <source>
    </source>
</evidence>
<evidence type="ECO:0000305" key="9">
    <source>
    </source>
</evidence>
<evidence type="ECO:0000305" key="10">
    <source>
    </source>
</evidence>
<reference key="1">
    <citation type="journal article" date="2005" name="Nature">
        <title>Genomic sequence of the pathogenic and allergenic filamentous fungus Aspergillus fumigatus.</title>
        <authorList>
            <person name="Nierman W.C."/>
            <person name="Pain A."/>
            <person name="Anderson M.J."/>
            <person name="Wortman J.R."/>
            <person name="Kim H.S."/>
            <person name="Arroyo J."/>
            <person name="Berriman M."/>
            <person name="Abe K."/>
            <person name="Archer D.B."/>
            <person name="Bermejo C."/>
            <person name="Bennett J.W."/>
            <person name="Bowyer P."/>
            <person name="Chen D."/>
            <person name="Collins M."/>
            <person name="Coulsen R."/>
            <person name="Davies R."/>
            <person name="Dyer P.S."/>
            <person name="Farman M.L."/>
            <person name="Fedorova N."/>
            <person name="Fedorova N.D."/>
            <person name="Feldblyum T.V."/>
            <person name="Fischer R."/>
            <person name="Fosker N."/>
            <person name="Fraser A."/>
            <person name="Garcia J.L."/>
            <person name="Garcia M.J."/>
            <person name="Goble A."/>
            <person name="Goldman G.H."/>
            <person name="Gomi K."/>
            <person name="Griffith-Jones S."/>
            <person name="Gwilliam R."/>
            <person name="Haas B.J."/>
            <person name="Haas H."/>
            <person name="Harris D.E."/>
            <person name="Horiuchi H."/>
            <person name="Huang J."/>
            <person name="Humphray S."/>
            <person name="Jimenez J."/>
            <person name="Keller N."/>
            <person name="Khouri H."/>
            <person name="Kitamoto K."/>
            <person name="Kobayashi T."/>
            <person name="Konzack S."/>
            <person name="Kulkarni R."/>
            <person name="Kumagai T."/>
            <person name="Lafton A."/>
            <person name="Latge J.-P."/>
            <person name="Li W."/>
            <person name="Lord A."/>
            <person name="Lu C."/>
            <person name="Majoros W.H."/>
            <person name="May G.S."/>
            <person name="Miller B.L."/>
            <person name="Mohamoud Y."/>
            <person name="Molina M."/>
            <person name="Monod M."/>
            <person name="Mouyna I."/>
            <person name="Mulligan S."/>
            <person name="Murphy L.D."/>
            <person name="O'Neil S."/>
            <person name="Paulsen I."/>
            <person name="Penalva M.A."/>
            <person name="Pertea M."/>
            <person name="Price C."/>
            <person name="Pritchard B.L."/>
            <person name="Quail M.A."/>
            <person name="Rabbinowitsch E."/>
            <person name="Rawlins N."/>
            <person name="Rajandream M.A."/>
            <person name="Reichard U."/>
            <person name="Renauld H."/>
            <person name="Robson G.D."/>
            <person name="Rodriguez de Cordoba S."/>
            <person name="Rodriguez-Pena J.M."/>
            <person name="Ronning C.M."/>
            <person name="Rutter S."/>
            <person name="Salzberg S.L."/>
            <person name="Sanchez M."/>
            <person name="Sanchez-Ferrero J.C."/>
            <person name="Saunders D."/>
            <person name="Seeger K."/>
            <person name="Squares R."/>
            <person name="Squares S."/>
            <person name="Takeuchi M."/>
            <person name="Tekaia F."/>
            <person name="Turner G."/>
            <person name="Vazquez de Aldana C.R."/>
            <person name="Weidman J."/>
            <person name="White O."/>
            <person name="Woodward J.R."/>
            <person name="Yu J.-H."/>
            <person name="Fraser C.M."/>
            <person name="Galagan J.E."/>
            <person name="Asai K."/>
            <person name="Machida M."/>
            <person name="Hall N."/>
            <person name="Barrell B.G."/>
            <person name="Denning D.W."/>
        </authorList>
    </citation>
    <scope>NUCLEOTIDE SEQUENCE [LARGE SCALE GENOMIC DNA]</scope>
    <source>
        <strain>ATCC MYA-4609 / CBS 101355 / FGSC A1100 / Af293</strain>
    </source>
</reference>
<reference key="2">
    <citation type="journal article" date="1995" name="Appl. Environ. Microbiol.">
        <title>Aflavinines and other antiinsectan metabolites from the ascostromata of Eupenicillium crustaceum and related species.</title>
        <authorList>
            <person name="Wang H.J."/>
            <person name="Gloer J.B."/>
            <person name="Wicklow D.T."/>
            <person name="Dowd P.F."/>
        </authorList>
    </citation>
    <scope>BIOTECHNOLOGY</scope>
</reference>
<reference key="3">
    <citation type="journal article" date="2008" name="J. Antibiot.">
        <title>Selectivity of pyripyropene derivatives in inhibition toward acyl-CoA:cholesterol acyltransferase 2 isozyme.</title>
        <authorList>
            <person name="Ohshiro T."/>
            <person name="Ohte S."/>
            <person name="Matsuda D."/>
            <person name="Ohtawa M."/>
            <person name="Nagamitsu T."/>
            <person name="Sunazuka T."/>
            <person name="Harigaya Y."/>
            <person name="Rudel L.L."/>
            <person name="Omura S."/>
            <person name="Tomoda H."/>
        </authorList>
    </citation>
    <scope>BIOTECHNOLOGY</scope>
</reference>
<reference key="4">
    <citation type="journal article" date="2009" name="Biol. Pharm. Bull.">
        <title>Pyripyropenes, fungal sesquiterpenes conjugated with alpha-pyrone and pyridine moieties, exhibits anti-angiogenic activity against human umbilical vein endothelial cells.</title>
        <authorList>
            <person name="Hayashi A."/>
            <person name="Arai M."/>
            <person name="Fujita M."/>
            <person name="Kobayashi M."/>
        </authorList>
    </citation>
    <scope>BIOTECHNOLOGY</scope>
</reference>
<reference key="5">
    <citation type="journal article" date="2010" name="Nat. Chem.">
        <title>Reconstitution of a fungal meroterpenoid biosynthesis reveals the involvement of a novel family of terpene cyclases.</title>
        <authorList>
            <person name="Itoh T."/>
            <person name="Tokunaga K."/>
            <person name="Matsuda Y."/>
            <person name="Fujii I."/>
            <person name="Abe I."/>
            <person name="Ebizuka Y."/>
            <person name="Kushiro T."/>
        </authorList>
    </citation>
    <scope>FUNCTION</scope>
    <scope>CATALYTIC ACTIVITY</scope>
</reference>
<reference key="6">
    <citation type="journal article" date="2011" name="J. Antibiot.">
        <title>Characterization of two cytochrome P450 monooxygenase genes of the pyripyropene biosynthetic gene cluster from Penicillium coprobium.</title>
        <authorList>
            <person name="Hu J."/>
            <person name="Okawa H."/>
            <person name="Yamamoto K."/>
            <person name="Oyama K."/>
            <person name="Mitomi M."/>
            <person name="Anzai H."/>
        </authorList>
    </citation>
    <scope>FUNCTION</scope>
</reference>
<reference key="7">
    <citation type="journal article" date="2014" name="Biotechnol. Biotechnol. Equip.">
        <title>Characterization of two acetyltransferase genes in the pyripyropene biosynthetic gene cluster from Penicillium coprobium.</title>
        <authorList>
            <person name="Hu J."/>
            <person name="Furutani A."/>
            <person name="Yamamoto K."/>
            <person name="Oyama K."/>
            <person name="Mitomi M."/>
            <person name="Anzai H."/>
        </authorList>
    </citation>
    <scope>FUNCTION</scope>
</reference>
<organism>
    <name type="scientific">Aspergillus fumigatus (strain ATCC MYA-4609 / CBS 101355 / FGSC A1100 / Af293)</name>
    <name type="common">Neosartorya fumigata</name>
    <dbReference type="NCBI Taxonomy" id="330879"/>
    <lineage>
        <taxon>Eukaryota</taxon>
        <taxon>Fungi</taxon>
        <taxon>Dikarya</taxon>
        <taxon>Ascomycota</taxon>
        <taxon>Pezizomycotina</taxon>
        <taxon>Eurotiomycetes</taxon>
        <taxon>Eurotiomycetidae</taxon>
        <taxon>Eurotiales</taxon>
        <taxon>Aspergillaceae</taxon>
        <taxon>Aspergillus</taxon>
        <taxon>Aspergillus subgen. Fumigati</taxon>
    </lineage>
</organism>
<dbReference type="EC" id="2.3.1.-" evidence="8"/>
<dbReference type="EMBL" id="AAHF01000006">
    <property type="protein sequence ID" value="EAL89236.1"/>
    <property type="molecule type" value="Genomic_DNA"/>
</dbReference>
<dbReference type="RefSeq" id="XP_751274.1">
    <property type="nucleotide sequence ID" value="XM_746181.1"/>
</dbReference>
<dbReference type="STRING" id="330879.Q4WLC8"/>
<dbReference type="EnsemblFungi" id="EAL89236">
    <property type="protein sequence ID" value="EAL89236"/>
    <property type="gene ID" value="AFUA_6G14000"/>
</dbReference>
<dbReference type="GeneID" id="3508590"/>
<dbReference type="KEGG" id="afm:AFUA_6G14000"/>
<dbReference type="VEuPathDB" id="FungiDB:Afu6g14000"/>
<dbReference type="eggNOG" id="ENOG502SI5I">
    <property type="taxonomic scope" value="Eukaryota"/>
</dbReference>
<dbReference type="HOGENOM" id="CLU_032731_0_1_1"/>
<dbReference type="InParanoid" id="Q4WLC8"/>
<dbReference type="OMA" id="STAITCR"/>
<dbReference type="OrthoDB" id="1077582at2759"/>
<dbReference type="UniPathway" id="UPA00213"/>
<dbReference type="Proteomes" id="UP000002530">
    <property type="component" value="Chromosome 6"/>
</dbReference>
<dbReference type="GO" id="GO:0016020">
    <property type="term" value="C:membrane"/>
    <property type="evidence" value="ECO:0007669"/>
    <property type="project" value="UniProtKB-SubCell"/>
</dbReference>
<dbReference type="GO" id="GO:0008374">
    <property type="term" value="F:O-acyltransferase activity"/>
    <property type="evidence" value="ECO:0007669"/>
    <property type="project" value="InterPro"/>
</dbReference>
<dbReference type="GO" id="GO:0016114">
    <property type="term" value="P:terpenoid biosynthetic process"/>
    <property type="evidence" value="ECO:0007669"/>
    <property type="project" value="UniProtKB-UniPathway"/>
</dbReference>
<dbReference type="InterPro" id="IPR044851">
    <property type="entry name" value="Wax_synthase"/>
</dbReference>
<dbReference type="InterPro" id="IPR032805">
    <property type="entry name" value="Wax_synthase_dom"/>
</dbReference>
<dbReference type="PANTHER" id="PTHR31595">
    <property type="entry name" value="LONG-CHAIN-ALCOHOL O-FATTY-ACYLTRANSFERASE 3-RELATED"/>
    <property type="match status" value="1"/>
</dbReference>
<dbReference type="PANTHER" id="PTHR31595:SF27">
    <property type="entry name" value="WAX SYNTHASE DOMAIN-CONTAINING PROTEIN-RELATED"/>
    <property type="match status" value="1"/>
</dbReference>
<dbReference type="Pfam" id="PF13813">
    <property type="entry name" value="MBOAT_2"/>
    <property type="match status" value="1"/>
</dbReference>
<keyword id="KW-0012">Acyltransferase</keyword>
<keyword id="KW-0472">Membrane</keyword>
<keyword id="KW-1185">Reference proteome</keyword>
<keyword id="KW-0808">Transferase</keyword>
<keyword id="KW-0812">Transmembrane</keyword>
<keyword id="KW-1133">Transmembrane helix</keyword>
<proteinExistence type="evidence at protein level"/>
<feature type="chain" id="PRO_0000436680" description="Acetyltransferase pyr8">
    <location>
        <begin position="1"/>
        <end position="429"/>
    </location>
</feature>
<feature type="transmembrane region" description="Helical" evidence="1">
    <location>
        <begin position="12"/>
        <end position="32"/>
    </location>
</feature>
<feature type="transmembrane region" description="Helical" evidence="1">
    <location>
        <begin position="39"/>
        <end position="56"/>
    </location>
</feature>
<feature type="transmembrane region" description="Helical" evidence="1">
    <location>
        <begin position="69"/>
        <end position="89"/>
    </location>
</feature>
<feature type="transmembrane region" description="Helical" evidence="1">
    <location>
        <begin position="154"/>
        <end position="174"/>
    </location>
</feature>
<feature type="transmembrane region" description="Helical" evidence="1">
    <location>
        <begin position="221"/>
        <end position="241"/>
    </location>
</feature>
<feature type="transmembrane region" description="Helical" evidence="1">
    <location>
        <begin position="300"/>
        <end position="320"/>
    </location>
</feature>
<feature type="transmembrane region" description="Helical" evidence="1">
    <location>
        <begin position="324"/>
        <end position="344"/>
    </location>
</feature>
<feature type="transmembrane region" description="Helical" evidence="1">
    <location>
        <begin position="365"/>
        <end position="385"/>
    </location>
</feature>
<feature type="transmembrane region" description="Helical" evidence="1">
    <location>
        <begin position="409"/>
        <end position="429"/>
    </location>
</feature>
<sequence>MDLVPSSTLWSIAQELALYLAFTVPTAFVIITTPKSSFLRLAWTPCLLYILYRFSLQVPSLTTSQFLNGVAAGQATVAALQCLNLLLITKLDERELVHAGLCIPSSSLLVRVACAWALLVNFRGIGTVWEVKNVPQHAAYLQKPKQHRLSRRRYVLRESAIIIWQYLLLDLIHMSTKDTPPGDLARLFGPGLEYRYLDATAEQWFGRVSVGIFSWLVPSRVCLNIVSRIYCLVLVVLRISAPESCRPSFGRVRDACTIRGFWGKFWHQSFRWPLTSVGSFVARDVLRLPRPSLLERYTNIFFTFFTSAVLHLACDAILGIPPSGSGAMPFFCVVPLAIMFEDGVQEVWRRVTGPSQGAVPFWQRLVGFLWVGSWMYATSPWYLYPAARQPPERTWMVPVSVVGEIGLRVAQKVLLVYGVVLYWAIGGEI</sequence>
<accession>Q4WLC8</accession>
<gene>
    <name evidence="6" type="primary">pyr8</name>
    <name type="ORF">AFUA_6G14000</name>
</gene>